<feature type="chain" id="PRO_0000216869" description="Uncharacterized protein BC_1230">
    <location>
        <begin position="1"/>
        <end position="132"/>
    </location>
</feature>
<feature type="domain" description="BIG2" evidence="1">
    <location>
        <begin position="45"/>
        <end position="115"/>
    </location>
</feature>
<name>Y1230_BACCR</name>
<organism>
    <name type="scientific">Bacillus cereus (strain ATCC 14579 / DSM 31 / CCUG 7414 / JCM 2152 / NBRC 15305 / NCIMB 9373 / NCTC 2599 / NRRL B-3711)</name>
    <dbReference type="NCBI Taxonomy" id="226900"/>
    <lineage>
        <taxon>Bacteria</taxon>
        <taxon>Bacillati</taxon>
        <taxon>Bacillota</taxon>
        <taxon>Bacilli</taxon>
        <taxon>Bacillales</taxon>
        <taxon>Bacillaceae</taxon>
        <taxon>Bacillus</taxon>
        <taxon>Bacillus cereus group</taxon>
    </lineage>
</organism>
<comment type="similarity">
    <text evidence="2">To B.anthracis BA1245.</text>
</comment>
<accession>P59812</accession>
<reference key="1">
    <citation type="journal article" date="2003" name="Nature">
        <title>Genome sequence of Bacillus cereus and comparative analysis with Bacillus anthracis.</title>
        <authorList>
            <person name="Ivanova N."/>
            <person name="Sorokin A."/>
            <person name="Anderson I."/>
            <person name="Galleron N."/>
            <person name="Candelon B."/>
            <person name="Kapatral V."/>
            <person name="Bhattacharyya A."/>
            <person name="Reznik G."/>
            <person name="Mikhailova N."/>
            <person name="Lapidus A."/>
            <person name="Chu L."/>
            <person name="Mazur M."/>
            <person name="Goltsman E."/>
            <person name="Larsen N."/>
            <person name="D'Souza M."/>
            <person name="Walunas T."/>
            <person name="Grechkin Y."/>
            <person name="Pusch G."/>
            <person name="Haselkorn R."/>
            <person name="Fonstein M."/>
            <person name="Ehrlich S.D."/>
            <person name="Overbeek R."/>
            <person name="Kyrpides N.C."/>
        </authorList>
    </citation>
    <scope>NUCLEOTIDE SEQUENCE [LARGE SCALE GENOMIC DNA]</scope>
    <source>
        <strain>ATCC 14579 / DSM 31 / CCUG 7414 / JCM 2152 / NBRC 15305 / NCIMB 9373 / NCTC 2599 / NRRL B-3711</strain>
    </source>
</reference>
<protein>
    <recommendedName>
        <fullName>Uncharacterized protein BC_1230</fullName>
    </recommendedName>
</protein>
<gene>
    <name type="ordered locus">BC_1230</name>
</gene>
<dbReference type="EMBL" id="AE016877">
    <property type="protein sequence ID" value="AAP08215.1"/>
    <property type="molecule type" value="Genomic_DNA"/>
</dbReference>
<dbReference type="RefSeq" id="NP_831014.1">
    <property type="nucleotide sequence ID" value="NC_004722.1"/>
</dbReference>
<dbReference type="RefSeq" id="WP_000878734.1">
    <property type="nucleotide sequence ID" value="NZ_CP138336.1"/>
</dbReference>
<dbReference type="SMR" id="P59812"/>
<dbReference type="STRING" id="226900.BC_1230"/>
<dbReference type="KEGG" id="bce:BC1230"/>
<dbReference type="PATRIC" id="fig|226900.8.peg.1200"/>
<dbReference type="HOGENOM" id="CLU_157754_0_0_9"/>
<dbReference type="OrthoDB" id="2913628at2"/>
<dbReference type="Proteomes" id="UP000001417">
    <property type="component" value="Chromosome"/>
</dbReference>
<dbReference type="Gene3D" id="2.60.40.1080">
    <property type="match status" value="1"/>
</dbReference>
<dbReference type="InterPro" id="IPR003343">
    <property type="entry name" value="Big_2"/>
</dbReference>
<dbReference type="InterPro" id="IPR008964">
    <property type="entry name" value="Invasin/intimin_cell_adhesion"/>
</dbReference>
<dbReference type="Pfam" id="PF02368">
    <property type="entry name" value="Big_2"/>
    <property type="match status" value="1"/>
</dbReference>
<dbReference type="SMART" id="SM00635">
    <property type="entry name" value="BID_2"/>
    <property type="match status" value="1"/>
</dbReference>
<dbReference type="SUPFAM" id="SSF49373">
    <property type="entry name" value="Invasin/intimin cell-adhesion fragments"/>
    <property type="match status" value="1"/>
</dbReference>
<evidence type="ECO:0000255" key="1"/>
<evidence type="ECO:0000305" key="2"/>
<keyword id="KW-1185">Reference proteome</keyword>
<sequence>MLAAFQQQQTRKFSPITNTSASCLNMQPNPPKISIAPSVISVIGVHMEKHKLKIKTGQNIVLSASILPIQATNKELIWSNMNSDIITIYPKGDTVTITGKSAGKAVVIVTTAEGKFRDLCVIHVQPYMTNPK</sequence>
<proteinExistence type="predicted"/>